<feature type="chain" id="PRO_1000118664" description="Diaminopimelate epimerase">
    <location>
        <begin position="1"/>
        <end position="288"/>
    </location>
</feature>
<feature type="active site" description="Proton donor" evidence="1">
    <location>
        <position position="76"/>
    </location>
</feature>
<feature type="active site" description="Proton acceptor" evidence="1">
    <location>
        <position position="226"/>
    </location>
</feature>
<feature type="binding site" evidence="1">
    <location>
        <position position="14"/>
    </location>
    <ligand>
        <name>substrate</name>
    </ligand>
</feature>
<feature type="binding site" evidence="1">
    <location>
        <position position="67"/>
    </location>
    <ligand>
        <name>substrate</name>
    </ligand>
</feature>
<feature type="binding site" evidence="1">
    <location>
        <begin position="77"/>
        <end position="78"/>
    </location>
    <ligand>
        <name>substrate</name>
    </ligand>
</feature>
<feature type="binding site" evidence="1">
    <location>
        <position position="166"/>
    </location>
    <ligand>
        <name>substrate</name>
    </ligand>
</feature>
<feature type="binding site" evidence="1">
    <location>
        <position position="199"/>
    </location>
    <ligand>
        <name>substrate</name>
    </ligand>
</feature>
<feature type="binding site" evidence="1">
    <location>
        <begin position="217"/>
        <end position="218"/>
    </location>
    <ligand>
        <name>substrate</name>
    </ligand>
</feature>
<feature type="binding site" evidence="1">
    <location>
        <begin position="227"/>
        <end position="228"/>
    </location>
    <ligand>
        <name>substrate</name>
    </ligand>
</feature>
<feature type="site" description="Could be important to modulate the pK values of the two catalytic cysteine residues" evidence="1">
    <location>
        <position position="168"/>
    </location>
</feature>
<feature type="site" description="Could be important to modulate the pK values of the two catalytic cysteine residues" evidence="1">
    <location>
        <position position="217"/>
    </location>
</feature>
<gene>
    <name evidence="1" type="primary">dapF</name>
    <name type="ordered locus">BCAH187_A5079</name>
</gene>
<name>DAPF_BACC7</name>
<evidence type="ECO:0000255" key="1">
    <source>
        <dbReference type="HAMAP-Rule" id="MF_00197"/>
    </source>
</evidence>
<proteinExistence type="inferred from homology"/>
<reference key="1">
    <citation type="submission" date="2008-10" db="EMBL/GenBank/DDBJ databases">
        <title>Genome sequence of Bacillus cereus AH187.</title>
        <authorList>
            <person name="Dodson R.J."/>
            <person name="Durkin A.S."/>
            <person name="Rosovitz M.J."/>
            <person name="Rasko D.A."/>
            <person name="Kolsto A.B."/>
            <person name="Okstad O.A."/>
            <person name="Ravel J."/>
            <person name="Sutton G."/>
        </authorList>
    </citation>
    <scope>NUCLEOTIDE SEQUENCE [LARGE SCALE GENOMIC DNA]</scope>
    <source>
        <strain>AH187</strain>
    </source>
</reference>
<protein>
    <recommendedName>
        <fullName evidence="1">Diaminopimelate epimerase</fullName>
        <shortName evidence="1">DAP epimerase</shortName>
        <ecNumber evidence="1">5.1.1.7</ecNumber>
    </recommendedName>
    <alternativeName>
        <fullName evidence="1">PLP-independent amino acid racemase</fullName>
    </alternativeName>
</protein>
<accession>B7HUS8</accession>
<dbReference type="EC" id="5.1.1.7" evidence="1"/>
<dbReference type="EMBL" id="CP001177">
    <property type="protein sequence ID" value="ACJ79092.1"/>
    <property type="molecule type" value="Genomic_DNA"/>
</dbReference>
<dbReference type="SMR" id="B7HUS8"/>
<dbReference type="KEGG" id="bcr:BCAH187_A5079"/>
<dbReference type="HOGENOM" id="CLU_053306_3_0_9"/>
<dbReference type="UniPathway" id="UPA00034">
    <property type="reaction ID" value="UER00025"/>
</dbReference>
<dbReference type="Proteomes" id="UP000002214">
    <property type="component" value="Chromosome"/>
</dbReference>
<dbReference type="GO" id="GO:0005829">
    <property type="term" value="C:cytosol"/>
    <property type="evidence" value="ECO:0007669"/>
    <property type="project" value="TreeGrafter"/>
</dbReference>
<dbReference type="GO" id="GO:0008837">
    <property type="term" value="F:diaminopimelate epimerase activity"/>
    <property type="evidence" value="ECO:0007669"/>
    <property type="project" value="UniProtKB-UniRule"/>
</dbReference>
<dbReference type="GO" id="GO:0009089">
    <property type="term" value="P:lysine biosynthetic process via diaminopimelate"/>
    <property type="evidence" value="ECO:0007669"/>
    <property type="project" value="UniProtKB-UniRule"/>
</dbReference>
<dbReference type="FunFam" id="3.10.310.10:FF:000004">
    <property type="entry name" value="Diaminopimelate epimerase"/>
    <property type="match status" value="1"/>
</dbReference>
<dbReference type="FunFam" id="3.10.310.10:FF:000006">
    <property type="entry name" value="Diaminopimelate epimerase"/>
    <property type="match status" value="1"/>
</dbReference>
<dbReference type="Gene3D" id="3.10.310.10">
    <property type="entry name" value="Diaminopimelate Epimerase, Chain A, domain 1"/>
    <property type="match status" value="2"/>
</dbReference>
<dbReference type="HAMAP" id="MF_00197">
    <property type="entry name" value="DAP_epimerase"/>
    <property type="match status" value="1"/>
</dbReference>
<dbReference type="InterPro" id="IPR018510">
    <property type="entry name" value="DAP_epimerase_AS"/>
</dbReference>
<dbReference type="InterPro" id="IPR001653">
    <property type="entry name" value="DAP_epimerase_DapF"/>
</dbReference>
<dbReference type="NCBIfam" id="TIGR00652">
    <property type="entry name" value="DapF"/>
    <property type="match status" value="1"/>
</dbReference>
<dbReference type="PANTHER" id="PTHR31689:SF0">
    <property type="entry name" value="DIAMINOPIMELATE EPIMERASE"/>
    <property type="match status" value="1"/>
</dbReference>
<dbReference type="PANTHER" id="PTHR31689">
    <property type="entry name" value="DIAMINOPIMELATE EPIMERASE, CHLOROPLASTIC"/>
    <property type="match status" value="1"/>
</dbReference>
<dbReference type="Pfam" id="PF01678">
    <property type="entry name" value="DAP_epimerase"/>
    <property type="match status" value="2"/>
</dbReference>
<dbReference type="SUPFAM" id="SSF54506">
    <property type="entry name" value="Diaminopimelate epimerase-like"/>
    <property type="match status" value="1"/>
</dbReference>
<dbReference type="PROSITE" id="PS01326">
    <property type="entry name" value="DAP_EPIMERASE"/>
    <property type="match status" value="1"/>
</dbReference>
<organism>
    <name type="scientific">Bacillus cereus (strain AH187)</name>
    <dbReference type="NCBI Taxonomy" id="405534"/>
    <lineage>
        <taxon>Bacteria</taxon>
        <taxon>Bacillati</taxon>
        <taxon>Bacillota</taxon>
        <taxon>Bacilli</taxon>
        <taxon>Bacillales</taxon>
        <taxon>Bacillaceae</taxon>
        <taxon>Bacillus</taxon>
        <taxon>Bacillus cereus group</taxon>
    </lineage>
</organism>
<comment type="function">
    <text evidence="1">Catalyzes the stereoinversion of LL-2,6-diaminopimelate (L,L-DAP) to meso-diaminopimelate (meso-DAP), a precursor of L-lysine and an essential component of the bacterial peptidoglycan.</text>
</comment>
<comment type="catalytic activity">
    <reaction evidence="1">
        <text>(2S,6S)-2,6-diaminopimelate = meso-2,6-diaminopimelate</text>
        <dbReference type="Rhea" id="RHEA:15393"/>
        <dbReference type="ChEBI" id="CHEBI:57609"/>
        <dbReference type="ChEBI" id="CHEBI:57791"/>
        <dbReference type="EC" id="5.1.1.7"/>
    </reaction>
</comment>
<comment type="pathway">
    <text evidence="1">Amino-acid biosynthesis; L-lysine biosynthesis via DAP pathway; DL-2,6-diaminopimelate from LL-2,6-diaminopimelate: step 1/1.</text>
</comment>
<comment type="subunit">
    <text evidence="1">Homodimer.</text>
</comment>
<comment type="subcellular location">
    <subcellularLocation>
        <location evidence="1">Cytoplasm</location>
    </subcellularLocation>
</comment>
<comment type="similarity">
    <text evidence="1">Belongs to the diaminopimelate epimerase family.</text>
</comment>
<sequence>MSQFSFTKMHGLGNSYIYVNMFEEQIPEEDLALVAEKVSNINTGIGADGMILICPSDVAPVKMRMFNNDGSEGKSCGNGLRCVAKYAYEHKLVEDTVFTIETLAGIVTAEVTVEEGKVTLAKIDMGAPRLTRAEIPMLGEGETPFIRENFLYNNHRYAFTAVSMGNPHAVIFVDDVEQAPLTTLGPVLETHEMFPERVNVEFIEILNEEEMNFRVWERGSGVTQACGTGACAAVVASILNGKMERGKEITVHLAGGDLMIAWTEEGNVLMKGPAEVICHGVYEYKIEA</sequence>
<keyword id="KW-0028">Amino-acid biosynthesis</keyword>
<keyword id="KW-0963">Cytoplasm</keyword>
<keyword id="KW-0413">Isomerase</keyword>
<keyword id="KW-0457">Lysine biosynthesis</keyword>